<protein>
    <recommendedName>
        <fullName>Caspase-3</fullName>
        <shortName>CASP-3</shortName>
        <ecNumber>3.4.22.56</ecNumber>
    </recommendedName>
    <alternativeName>
        <fullName>Apopain</fullName>
    </alternativeName>
    <alternativeName>
        <fullName>Cysteine protease CPP32</fullName>
        <shortName>CPP-32</shortName>
    </alternativeName>
    <alternativeName>
        <fullName>Protein Yama</fullName>
    </alternativeName>
    <alternativeName>
        <fullName>SREBP cleavage activity 1</fullName>
        <shortName>SCA-1</shortName>
    </alternativeName>
    <component>
        <recommendedName>
            <fullName>Caspase-3 subunit p17</fullName>
        </recommendedName>
    </component>
    <component>
        <recommendedName>
            <fullName>Caspase-3 subunit p12</fullName>
        </recommendedName>
    </component>
</protein>
<sequence length="277" mass="31612">MENNETSVDSKSIKNFEVKTIHGSKSMDSGIYLDSSYKMDYPEMGVCIIINNKNFHKSTGMTPRSGTDVDAAKLRETFMALKYEVRNKNDLTREEIVELMKNASKEDHSKRSSFVCVILSHGDEGVIFGTDGPIDLKKLTSYFRGDYCRSLIGKPKLFIIQACRGTELDCGIETDSGTEDDMTCQKIPVEADFLYAYSTAPGYYSWRNPKDGSWFIQSLCSMLKLYAHKLEFMHILTRVNRKVATEFESFSLDSTFHAKKQIPCIVSMLTKELYFYH</sequence>
<feature type="propeptide" id="PRO_0000004561" evidence="2">
    <location>
        <begin position="1"/>
        <end position="9"/>
    </location>
</feature>
<feature type="propeptide" id="PRO_0000004562" evidence="2">
    <location>
        <begin position="10"/>
        <end position="28"/>
    </location>
</feature>
<feature type="chain" id="PRO_0000004563" description="Caspase-3 subunit p17" evidence="2">
    <location>
        <begin position="29"/>
        <end position="175"/>
    </location>
</feature>
<feature type="chain" id="PRO_0000004564" description="Caspase-3 subunit p12" evidence="2">
    <location>
        <begin position="176"/>
        <end position="277"/>
    </location>
</feature>
<feature type="active site" evidence="1">
    <location>
        <position position="121"/>
    </location>
</feature>
<feature type="active site" evidence="1">
    <location>
        <position position="163"/>
    </location>
</feature>
<feature type="modified residue" description="N-acetylmethionine" evidence="2">
    <location>
        <position position="1"/>
    </location>
</feature>
<feature type="modified residue" description="N6-acetyllysine" evidence="3">
    <location>
        <position position="11"/>
    </location>
</feature>
<feature type="modified residue" description="Phosphoserine" evidence="2">
    <location>
        <position position="26"/>
    </location>
</feature>
<feature type="modified residue" description="S-nitrosocysteine; in inhibited form" evidence="2">
    <location>
        <position position="163"/>
    </location>
</feature>
<proteinExistence type="evidence at transcript level"/>
<gene>
    <name type="primary">CASP3</name>
    <name type="synonym">CPP32</name>
</gene>
<reference key="1">
    <citation type="journal article" date="1996" name="EMBO J.">
        <title>Cleavage of sterol regulatory element binding proteins (SREBPs) by CPP32 during apoptosis.</title>
        <authorList>
            <person name="Wang X."/>
            <person name="Zelenski N.G."/>
            <person name="Yang J."/>
            <person name="Sakai J."/>
            <person name="Brown M.S."/>
            <person name="Goldstein J.L."/>
        </authorList>
    </citation>
    <scope>NUCLEOTIDE SEQUENCE [MRNA]</scope>
    <scope>FUNCTION</scope>
    <source>
        <tissue>Brain</tissue>
    </source>
</reference>
<dbReference type="EC" id="3.4.22.56"/>
<dbReference type="EMBL" id="U27463">
    <property type="protein sequence ID" value="AAB01511.1"/>
    <property type="molecule type" value="mRNA"/>
</dbReference>
<dbReference type="PIR" id="S64710">
    <property type="entry name" value="S64710"/>
</dbReference>
<dbReference type="RefSeq" id="NP_001268511.1">
    <property type="nucleotide sequence ID" value="NM_001281582.1"/>
</dbReference>
<dbReference type="SMR" id="Q60431"/>
<dbReference type="DIP" id="DIP-987N"/>
<dbReference type="STRING" id="10036.ENSMAUP00000004036"/>
<dbReference type="MEROPS" id="C14.003"/>
<dbReference type="GeneID" id="101828960"/>
<dbReference type="KEGG" id="maua:101828960"/>
<dbReference type="CTD" id="836"/>
<dbReference type="OrthoDB" id="6116485at2759"/>
<dbReference type="Proteomes" id="UP000189706">
    <property type="component" value="Unplaced"/>
</dbReference>
<dbReference type="GO" id="GO:0005737">
    <property type="term" value="C:cytoplasm"/>
    <property type="evidence" value="ECO:0007669"/>
    <property type="project" value="UniProtKB-SubCell"/>
</dbReference>
<dbReference type="GO" id="GO:0031264">
    <property type="term" value="C:death-inducing signaling complex"/>
    <property type="evidence" value="ECO:0007669"/>
    <property type="project" value="TreeGrafter"/>
</dbReference>
<dbReference type="GO" id="GO:0004197">
    <property type="term" value="F:cysteine-type endopeptidase activity"/>
    <property type="evidence" value="ECO:0000250"/>
    <property type="project" value="UniProtKB"/>
</dbReference>
<dbReference type="GO" id="GO:0004175">
    <property type="term" value="F:endopeptidase activity"/>
    <property type="evidence" value="ECO:0000250"/>
    <property type="project" value="UniProtKB"/>
</dbReference>
<dbReference type="GO" id="GO:0006915">
    <property type="term" value="P:apoptotic process"/>
    <property type="evidence" value="ECO:0007669"/>
    <property type="project" value="UniProtKB-KW"/>
</dbReference>
<dbReference type="GO" id="GO:0030218">
    <property type="term" value="P:erythrocyte differentiation"/>
    <property type="evidence" value="ECO:0007669"/>
    <property type="project" value="TreeGrafter"/>
</dbReference>
<dbReference type="GO" id="GO:0030216">
    <property type="term" value="P:keratinocyte differentiation"/>
    <property type="evidence" value="ECO:0007669"/>
    <property type="project" value="TreeGrafter"/>
</dbReference>
<dbReference type="GO" id="GO:0030182">
    <property type="term" value="P:neuron differentiation"/>
    <property type="evidence" value="ECO:0007669"/>
    <property type="project" value="TreeGrafter"/>
</dbReference>
<dbReference type="GO" id="GO:1902004">
    <property type="term" value="P:positive regulation of amyloid-beta formation"/>
    <property type="evidence" value="ECO:0000250"/>
    <property type="project" value="UniProtKB"/>
</dbReference>
<dbReference type="GO" id="GO:0043525">
    <property type="term" value="P:positive regulation of neuron apoptotic process"/>
    <property type="evidence" value="ECO:0007669"/>
    <property type="project" value="TreeGrafter"/>
</dbReference>
<dbReference type="GO" id="GO:0006508">
    <property type="term" value="P:proteolysis"/>
    <property type="evidence" value="ECO:0000250"/>
    <property type="project" value="UniProtKB"/>
</dbReference>
<dbReference type="GO" id="GO:0031647">
    <property type="term" value="P:regulation of protein stability"/>
    <property type="evidence" value="ECO:0000250"/>
    <property type="project" value="UniProtKB"/>
</dbReference>
<dbReference type="CDD" id="cd00032">
    <property type="entry name" value="CASc"/>
    <property type="match status" value="1"/>
</dbReference>
<dbReference type="FunFam" id="3.40.50.1460:FF:000001">
    <property type="entry name" value="Caspase-3 preproprotein"/>
    <property type="match status" value="1"/>
</dbReference>
<dbReference type="Gene3D" id="3.40.50.1460">
    <property type="match status" value="1"/>
</dbReference>
<dbReference type="InterPro" id="IPR029030">
    <property type="entry name" value="Caspase-like_dom_sf"/>
</dbReference>
<dbReference type="InterPro" id="IPR033139">
    <property type="entry name" value="Caspase_cys_AS"/>
</dbReference>
<dbReference type="InterPro" id="IPR016129">
    <property type="entry name" value="Caspase_his_AS"/>
</dbReference>
<dbReference type="InterPro" id="IPR002398">
    <property type="entry name" value="Pept_C14"/>
</dbReference>
<dbReference type="InterPro" id="IPR011600">
    <property type="entry name" value="Pept_C14_caspase"/>
</dbReference>
<dbReference type="InterPro" id="IPR002138">
    <property type="entry name" value="Pept_C14_p10"/>
</dbReference>
<dbReference type="InterPro" id="IPR001309">
    <property type="entry name" value="Pept_C14_p20"/>
</dbReference>
<dbReference type="InterPro" id="IPR015917">
    <property type="entry name" value="Pept_C14A"/>
</dbReference>
<dbReference type="PANTHER" id="PTHR10454">
    <property type="entry name" value="CASPASE"/>
    <property type="match status" value="1"/>
</dbReference>
<dbReference type="PANTHER" id="PTHR10454:SF198">
    <property type="entry name" value="CASPASE-3"/>
    <property type="match status" value="1"/>
</dbReference>
<dbReference type="Pfam" id="PF00656">
    <property type="entry name" value="Peptidase_C14"/>
    <property type="match status" value="1"/>
</dbReference>
<dbReference type="PRINTS" id="PR00376">
    <property type="entry name" value="IL1BCENZYME"/>
</dbReference>
<dbReference type="SMART" id="SM00115">
    <property type="entry name" value="CASc"/>
    <property type="match status" value="1"/>
</dbReference>
<dbReference type="SUPFAM" id="SSF52129">
    <property type="entry name" value="Caspase-like"/>
    <property type="match status" value="1"/>
</dbReference>
<dbReference type="PROSITE" id="PS01122">
    <property type="entry name" value="CASPASE_CYS"/>
    <property type="match status" value="1"/>
</dbReference>
<dbReference type="PROSITE" id="PS01121">
    <property type="entry name" value="CASPASE_HIS"/>
    <property type="match status" value="1"/>
</dbReference>
<dbReference type="PROSITE" id="PS50207">
    <property type="entry name" value="CASPASE_P10"/>
    <property type="match status" value="1"/>
</dbReference>
<dbReference type="PROSITE" id="PS50208">
    <property type="entry name" value="CASPASE_P20"/>
    <property type="match status" value="1"/>
</dbReference>
<accession>Q60431</accession>
<organism>
    <name type="scientific">Mesocricetus auratus</name>
    <name type="common">Golden hamster</name>
    <dbReference type="NCBI Taxonomy" id="10036"/>
    <lineage>
        <taxon>Eukaryota</taxon>
        <taxon>Metazoa</taxon>
        <taxon>Chordata</taxon>
        <taxon>Craniata</taxon>
        <taxon>Vertebrata</taxon>
        <taxon>Euteleostomi</taxon>
        <taxon>Mammalia</taxon>
        <taxon>Eutheria</taxon>
        <taxon>Euarchontoglires</taxon>
        <taxon>Glires</taxon>
        <taxon>Rodentia</taxon>
        <taxon>Myomorpha</taxon>
        <taxon>Muroidea</taxon>
        <taxon>Cricetidae</taxon>
        <taxon>Cricetinae</taxon>
        <taxon>Mesocricetus</taxon>
    </lineage>
</organism>
<comment type="function">
    <text evidence="2 3 4">Involved in the activation cascade of caspases responsible for apoptosis execution (By similarity). At the onset of apoptosis, it proteolytically cleaves poly(ADP-ribose) polymerase PARP1 at a '216-Asp-|-Gly-217' bond (By similarity). Cleaves and activates sterol regulatory element binding proteins (SREBPs) between the basic helix-loop-helix leucine zipper domain and the membrane attachment domain (PubMed:8605870). Cleaves and activates caspase-6, -7 and -9 (CASP6, CASP7 and CASP9, respectively) (By similarity). Cleaves and inactivates interleukin-18 (IL18) (By similarity). Triggers cell adhesion in sympathetic neurons through RET cleavage (By similarity). Cleaves IL-1 beta between an Asp and an Ala, releasing the mature cytokine which is involved in a variety of inflammatory processes (By similarity). Cleaves and inhibits serine/threonine-protein kinase AKT1 in response to oxidative stress (By similarity). Acts as an inhibitor of type I interferon production during virus-induced apoptosis by mediating cleavage of antiviral proteins CGAS, IRF3 and MAVS, thereby preventing cytokine overproduction (By similarity). Also involved in pyroptosis by mediating cleavage and activation of gasdermin-E (GSDME) (By similarity). Cleaves XRCC4 and phospholipid scramblase proteins XKR4, XKR8 and XKR9, leading to promote phosphatidylserine exposure on apoptotic cell surface (By similarity). Cleaves BIRC6 following inhibition of BIRC6-caspase binding by DIABLO/SMAC (By similarity).</text>
</comment>
<comment type="catalytic activity">
    <reaction evidence="2">
        <text>Strict requirement for an Asp residue at positions P1 and P4. It has a preferred cleavage sequence of Asp-Xaa-Xaa-Asp-|- with a hydrophobic amino-acid residue at P2 and a hydrophilic amino-acid residue at P3, although Val or Ala are also accepted at this position.</text>
        <dbReference type="EC" id="3.4.22.56"/>
    </reaction>
</comment>
<comment type="activity regulation">
    <text evidence="2">Inhibited by BIRC6; following inhibition of BIRC6-caspase binding by DIABLO/SMAC, BIRC6 is subjected to caspase cleavage, leading to an increase in active caspases.</text>
</comment>
<comment type="subunit">
    <text evidence="2">Heterotetramer that consists of two anti-parallel arranged heterodimers, each one formed by a 17 kDa (p17) and a 12 kDa (p12) subunit. Interacts with BIRC6/bruce.</text>
</comment>
<comment type="subcellular location">
    <subcellularLocation>
        <location evidence="2">Cytoplasm</location>
    </subcellularLocation>
</comment>
<comment type="PTM">
    <text evidence="2">Cleavage by granzyme B, caspase-6, caspase-8 and caspase-10 generates the two active subunits. Additional processing of the propeptides is likely due to the autocatalytic activity of the activated protease. Active heterodimers between the small subunit of caspase-7 protease and the large subunit of caspase-3 also occur and vice versa.</text>
</comment>
<comment type="PTM">
    <text evidence="2">S-nitrosylated on its catalytic site cysteine in unstimulated cell lines and denitrosylated upon activation of the Fas apoptotic pathway, associated with an increase in intracellular caspase activity. Fas therefore activates caspase-3 not only by inducing the cleavage of the caspase zymogen to its active subunits, but also by stimulating the denitrosylation of its active site thiol.</text>
</comment>
<comment type="PTM">
    <text evidence="2">Ubiquitinated by BIRC6; this activity is inhibited by DIABLO/SMAC.</text>
</comment>
<comment type="similarity">
    <text evidence="5">Belongs to the peptidase C14A family.</text>
</comment>
<name>CASP3_MESAU</name>
<evidence type="ECO:0000250" key="1">
    <source>
        <dbReference type="UniProtKB" id="P29466"/>
    </source>
</evidence>
<evidence type="ECO:0000250" key="2">
    <source>
        <dbReference type="UniProtKB" id="P42574"/>
    </source>
</evidence>
<evidence type="ECO:0000250" key="3">
    <source>
        <dbReference type="UniProtKB" id="P70677"/>
    </source>
</evidence>
<evidence type="ECO:0000269" key="4">
    <source>
    </source>
</evidence>
<evidence type="ECO:0000305" key="5"/>
<keyword id="KW-0007">Acetylation</keyword>
<keyword id="KW-0053">Apoptosis</keyword>
<keyword id="KW-0963">Cytoplasm</keyword>
<keyword id="KW-0378">Hydrolase</keyword>
<keyword id="KW-0597">Phosphoprotein</keyword>
<keyword id="KW-0645">Protease</keyword>
<keyword id="KW-1185">Reference proteome</keyword>
<keyword id="KW-0702">S-nitrosylation</keyword>
<keyword id="KW-0788">Thiol protease</keyword>
<keyword id="KW-0832">Ubl conjugation</keyword>
<keyword id="KW-0865">Zymogen</keyword>